<feature type="chain" id="PRO_0000346518" description="PKHD-type hydroxylase Sbal195_0750">
    <location>
        <begin position="1"/>
        <end position="224"/>
    </location>
</feature>
<feature type="domain" description="Fe2OG dioxygenase" evidence="1">
    <location>
        <begin position="78"/>
        <end position="176"/>
    </location>
</feature>
<feature type="binding site" evidence="1">
    <location>
        <position position="96"/>
    </location>
    <ligand>
        <name>Fe cation</name>
        <dbReference type="ChEBI" id="CHEBI:24875"/>
    </ligand>
</feature>
<feature type="binding site" evidence="1">
    <location>
        <position position="98"/>
    </location>
    <ligand>
        <name>Fe cation</name>
        <dbReference type="ChEBI" id="CHEBI:24875"/>
    </ligand>
</feature>
<feature type="binding site" evidence="1">
    <location>
        <position position="157"/>
    </location>
    <ligand>
        <name>Fe cation</name>
        <dbReference type="ChEBI" id="CHEBI:24875"/>
    </ligand>
</feature>
<feature type="binding site" evidence="1">
    <location>
        <position position="167"/>
    </location>
    <ligand>
        <name>2-oxoglutarate</name>
        <dbReference type="ChEBI" id="CHEBI:16810"/>
    </ligand>
</feature>
<evidence type="ECO:0000255" key="1">
    <source>
        <dbReference type="HAMAP-Rule" id="MF_00657"/>
    </source>
</evidence>
<evidence type="ECO:0000305" key="2"/>
<protein>
    <recommendedName>
        <fullName evidence="1">PKHD-type hydroxylase Sbal195_0750</fullName>
        <ecNumber evidence="1">1.14.11.-</ecNumber>
    </recommendedName>
</protein>
<name>Y750_SHEB9</name>
<gene>
    <name type="ordered locus">Sbal195_0750</name>
</gene>
<proteinExistence type="inferred from homology"/>
<reference key="1">
    <citation type="submission" date="2007-11" db="EMBL/GenBank/DDBJ databases">
        <title>Complete sequence of chromosome of Shewanella baltica OS195.</title>
        <authorList>
            <consortium name="US DOE Joint Genome Institute"/>
            <person name="Copeland A."/>
            <person name="Lucas S."/>
            <person name="Lapidus A."/>
            <person name="Barry K."/>
            <person name="Glavina del Rio T."/>
            <person name="Dalin E."/>
            <person name="Tice H."/>
            <person name="Pitluck S."/>
            <person name="Chain P."/>
            <person name="Malfatti S."/>
            <person name="Shin M."/>
            <person name="Vergez L."/>
            <person name="Schmutz J."/>
            <person name="Larimer F."/>
            <person name="Land M."/>
            <person name="Hauser L."/>
            <person name="Kyrpides N."/>
            <person name="Kim E."/>
            <person name="Brettar I."/>
            <person name="Rodrigues J."/>
            <person name="Konstantinidis K."/>
            <person name="Klappenbach J."/>
            <person name="Hofle M."/>
            <person name="Tiedje J."/>
            <person name="Richardson P."/>
        </authorList>
    </citation>
    <scope>NUCLEOTIDE SEQUENCE [LARGE SCALE GENOMIC DNA]</scope>
    <source>
        <strain>OS195</strain>
    </source>
</reference>
<keyword id="KW-0223">Dioxygenase</keyword>
<keyword id="KW-0408">Iron</keyword>
<keyword id="KW-0479">Metal-binding</keyword>
<keyword id="KW-0560">Oxidoreductase</keyword>
<keyword id="KW-0847">Vitamin C</keyword>
<comment type="cofactor">
    <cofactor evidence="1">
        <name>Fe(2+)</name>
        <dbReference type="ChEBI" id="CHEBI:29033"/>
    </cofactor>
    <text evidence="1">Binds 1 Fe(2+) ion per subunit.</text>
</comment>
<comment type="cofactor">
    <cofactor evidence="1">
        <name>L-ascorbate</name>
        <dbReference type="ChEBI" id="CHEBI:38290"/>
    </cofactor>
</comment>
<comment type="sequence caution" evidence="2">
    <conflict type="erroneous initiation">
        <sequence resource="EMBL-CDS" id="ABX47928"/>
    </conflict>
</comment>
<sequence>MLIEIPNVFSKQEVSHLREQLDARRWIDGNQTSGAMATTRKRNQQLDKDDPVAVALGQQIMDRLLAHPQFVSAALPLQFYPPLFNRYQGGETFGYHIDNAIRSTPDGMIRTDLSATLFLSEPESYQGGELVIQDTYGQQSIKLSAGSLVLYPSSSLHQVTPVLSGERTAAFMWLQSMVRDEGQRRLLFQLDQSIQTLTAQQAAEQELFNLTGIYHNLLRRWSEL</sequence>
<dbReference type="EC" id="1.14.11.-" evidence="1"/>
<dbReference type="EMBL" id="CP000891">
    <property type="protein sequence ID" value="ABX47928.1"/>
    <property type="status" value="ALT_INIT"/>
    <property type="molecule type" value="Genomic_DNA"/>
</dbReference>
<dbReference type="RefSeq" id="WP_006086056.1">
    <property type="nucleotide sequence ID" value="NC_009997.1"/>
</dbReference>
<dbReference type="SMR" id="A9L129"/>
<dbReference type="KEGG" id="sbn:Sbal195_0750"/>
<dbReference type="HOGENOM" id="CLU_106663_0_0_6"/>
<dbReference type="Proteomes" id="UP000000770">
    <property type="component" value="Chromosome"/>
</dbReference>
<dbReference type="GO" id="GO:0016706">
    <property type="term" value="F:2-oxoglutarate-dependent dioxygenase activity"/>
    <property type="evidence" value="ECO:0007669"/>
    <property type="project" value="UniProtKB-UniRule"/>
</dbReference>
<dbReference type="GO" id="GO:0005506">
    <property type="term" value="F:iron ion binding"/>
    <property type="evidence" value="ECO:0007669"/>
    <property type="project" value="UniProtKB-UniRule"/>
</dbReference>
<dbReference type="GO" id="GO:0031418">
    <property type="term" value="F:L-ascorbic acid binding"/>
    <property type="evidence" value="ECO:0007669"/>
    <property type="project" value="UniProtKB-KW"/>
</dbReference>
<dbReference type="GO" id="GO:0006974">
    <property type="term" value="P:DNA damage response"/>
    <property type="evidence" value="ECO:0007669"/>
    <property type="project" value="TreeGrafter"/>
</dbReference>
<dbReference type="GO" id="GO:0006879">
    <property type="term" value="P:intracellular iron ion homeostasis"/>
    <property type="evidence" value="ECO:0007669"/>
    <property type="project" value="TreeGrafter"/>
</dbReference>
<dbReference type="FunFam" id="2.60.120.620:FF:000006">
    <property type="entry name" value="PKHD-type hydroxylase YbiX"/>
    <property type="match status" value="1"/>
</dbReference>
<dbReference type="Gene3D" id="2.60.120.620">
    <property type="entry name" value="q2cbj1_9rhob like domain"/>
    <property type="match status" value="1"/>
</dbReference>
<dbReference type="Gene3D" id="4.10.860.20">
    <property type="entry name" value="Rabenosyn, Rab binding domain"/>
    <property type="match status" value="1"/>
</dbReference>
<dbReference type="HAMAP" id="MF_00657">
    <property type="entry name" value="Hydroxyl_YbiX"/>
    <property type="match status" value="1"/>
</dbReference>
<dbReference type="InterPro" id="IPR005123">
    <property type="entry name" value="Oxoglu/Fe-dep_dioxygenase_dom"/>
</dbReference>
<dbReference type="InterPro" id="IPR041097">
    <property type="entry name" value="PKHD_C"/>
</dbReference>
<dbReference type="InterPro" id="IPR023550">
    <property type="entry name" value="PKHD_hydroxylase"/>
</dbReference>
<dbReference type="InterPro" id="IPR006620">
    <property type="entry name" value="Pro_4_hyd_alph"/>
</dbReference>
<dbReference type="InterPro" id="IPR044862">
    <property type="entry name" value="Pro_4_hyd_alph_FE2OG_OXY"/>
</dbReference>
<dbReference type="NCBIfam" id="NF003974">
    <property type="entry name" value="PRK05467.1-3"/>
    <property type="match status" value="1"/>
</dbReference>
<dbReference type="NCBIfam" id="NF003975">
    <property type="entry name" value="PRK05467.1-4"/>
    <property type="match status" value="1"/>
</dbReference>
<dbReference type="PANTHER" id="PTHR41536">
    <property type="entry name" value="PKHD-TYPE HYDROXYLASE YBIX"/>
    <property type="match status" value="1"/>
</dbReference>
<dbReference type="PANTHER" id="PTHR41536:SF1">
    <property type="entry name" value="PKHD-TYPE HYDROXYLASE YBIX"/>
    <property type="match status" value="1"/>
</dbReference>
<dbReference type="Pfam" id="PF13640">
    <property type="entry name" value="2OG-FeII_Oxy_3"/>
    <property type="match status" value="1"/>
</dbReference>
<dbReference type="Pfam" id="PF18331">
    <property type="entry name" value="PKHD_C"/>
    <property type="match status" value="1"/>
</dbReference>
<dbReference type="SMART" id="SM00702">
    <property type="entry name" value="P4Hc"/>
    <property type="match status" value="1"/>
</dbReference>
<dbReference type="SUPFAM" id="SSF51197">
    <property type="entry name" value="Clavaminate synthase-like"/>
    <property type="match status" value="1"/>
</dbReference>
<dbReference type="PROSITE" id="PS51471">
    <property type="entry name" value="FE2OG_OXY"/>
    <property type="match status" value="1"/>
</dbReference>
<accession>A9L129</accession>
<organism>
    <name type="scientific">Shewanella baltica (strain OS195)</name>
    <dbReference type="NCBI Taxonomy" id="399599"/>
    <lineage>
        <taxon>Bacteria</taxon>
        <taxon>Pseudomonadati</taxon>
        <taxon>Pseudomonadota</taxon>
        <taxon>Gammaproteobacteria</taxon>
        <taxon>Alteromonadales</taxon>
        <taxon>Shewanellaceae</taxon>
        <taxon>Shewanella</taxon>
    </lineage>
</organism>